<name>PNP_EHRCJ</name>
<reference key="1">
    <citation type="journal article" date="2006" name="J. Bacteriol.">
        <title>The genome of the obligately intracellular bacterium Ehrlichia canis reveals themes of complex membrane structure and immune evasion strategies.</title>
        <authorList>
            <person name="Mavromatis K."/>
            <person name="Doyle C.K."/>
            <person name="Lykidis A."/>
            <person name="Ivanova N."/>
            <person name="Francino M.P."/>
            <person name="Chain P."/>
            <person name="Shin M."/>
            <person name="Malfatti S."/>
            <person name="Larimer F."/>
            <person name="Copeland A."/>
            <person name="Detter J.C."/>
            <person name="Land M."/>
            <person name="Richardson P.M."/>
            <person name="Yu X.J."/>
            <person name="Walker D.H."/>
            <person name="McBride J.W."/>
            <person name="Kyrpides N.C."/>
        </authorList>
    </citation>
    <scope>NUCLEOTIDE SEQUENCE [LARGE SCALE GENOMIC DNA]</scope>
    <source>
        <strain>Jake</strain>
    </source>
</reference>
<gene>
    <name evidence="1" type="primary">pnp</name>
    <name type="ordered locus">Ecaj_0338</name>
</gene>
<protein>
    <recommendedName>
        <fullName evidence="1">Polyribonucleotide nucleotidyltransferase</fullName>
        <ecNumber evidence="1">2.7.7.8</ecNumber>
    </recommendedName>
    <alternativeName>
        <fullName evidence="1">Polynucleotide phosphorylase</fullName>
        <shortName evidence="1">PNPase</shortName>
    </alternativeName>
</protein>
<sequence>MFNLIRKSTEWGGKTLILESGKIARQANGAVMVSYAGTTVLATVVTGKTKEPVDFLPLTVQFVAKSYAVGKIPGGFLKREGKPSDRETLISRLIDRSIRPLFPSGFYDEVSIVCNLLSYDTVTPPEVTALIGATAALSISGVSFNGLVAGVRIGYLPSEDKYLLNASADDMLYSSLDLFLSGNEDSVLMVESEASELSESQMLRAVTFGHQNCQEVINLIREFSEEKGVQPIEFIPHDINPIVNYIESSYKQDFSLAYSNTVKKERVLKLEELRDKVLSDFAEKCSVDNVECDNQDVISALKSFERSLVRSQIVETSSRIDGRAFDEIRNIEIEVDVLPKAHGSALFTRGNTQALVVTALGTPQDEQIVDDLDGDRRENFLLHYNFPPYAVGESAALRAPGRREIGHGKLAWRAIRYVLPEKSDFPYTIRVVSEITESDGSSSMATVCGASLALMDTGVPIKSPVAGIAMGLIKEGDKFIILSDILGDEDYLGDMDFKVAGTAEGVTALQMDMKISGISVDVIEKALLQAKDGRMHILSKMNAVIQESRNSIKNHAPRIESIFINKDKIRNVIGSGGKNIRDICEKTGAKIEIIQDGTVMIYAVNNEAVEYAKSMIMDIVTEPEIGKVFEGTVVEIVKFGAFVNFLGGKRGLIHISEIKNEHISAVGSVISVNDKVKVLVIGIDREHVQLSMRRVDQETGEPIDGELYNVRKSSFSDDSSSSGTSSSGSSFKESYSGNRHGSHEKRRSGGSRSSRRNSSGSNYYREDLHSSDFGNNNRSFSNSRNGHEVPRKPRFF</sequence>
<dbReference type="EC" id="2.7.7.8" evidence="1"/>
<dbReference type="EMBL" id="CP000107">
    <property type="protein sequence ID" value="AAZ68381.1"/>
    <property type="molecule type" value="Genomic_DNA"/>
</dbReference>
<dbReference type="RefSeq" id="WP_011304459.1">
    <property type="nucleotide sequence ID" value="NC_007354.1"/>
</dbReference>
<dbReference type="SMR" id="Q3YSC4"/>
<dbReference type="FunCoup" id="Q3YSC4">
    <property type="interactions" value="329"/>
</dbReference>
<dbReference type="STRING" id="269484.Ecaj_0338"/>
<dbReference type="KEGG" id="ecn:Ecaj_0338"/>
<dbReference type="eggNOG" id="COG1185">
    <property type="taxonomic scope" value="Bacteria"/>
</dbReference>
<dbReference type="HOGENOM" id="CLU_004217_2_2_5"/>
<dbReference type="InParanoid" id="Q3YSC4"/>
<dbReference type="Proteomes" id="UP000000435">
    <property type="component" value="Chromosome"/>
</dbReference>
<dbReference type="GO" id="GO:0005829">
    <property type="term" value="C:cytosol"/>
    <property type="evidence" value="ECO:0007669"/>
    <property type="project" value="TreeGrafter"/>
</dbReference>
<dbReference type="GO" id="GO:0000175">
    <property type="term" value="F:3'-5'-RNA exonuclease activity"/>
    <property type="evidence" value="ECO:0007669"/>
    <property type="project" value="TreeGrafter"/>
</dbReference>
<dbReference type="GO" id="GO:0000287">
    <property type="term" value="F:magnesium ion binding"/>
    <property type="evidence" value="ECO:0007669"/>
    <property type="project" value="UniProtKB-UniRule"/>
</dbReference>
<dbReference type="GO" id="GO:0004654">
    <property type="term" value="F:polyribonucleotide nucleotidyltransferase activity"/>
    <property type="evidence" value="ECO:0007669"/>
    <property type="project" value="UniProtKB-UniRule"/>
</dbReference>
<dbReference type="GO" id="GO:0003723">
    <property type="term" value="F:RNA binding"/>
    <property type="evidence" value="ECO:0007669"/>
    <property type="project" value="UniProtKB-UniRule"/>
</dbReference>
<dbReference type="GO" id="GO:0006402">
    <property type="term" value="P:mRNA catabolic process"/>
    <property type="evidence" value="ECO:0007669"/>
    <property type="project" value="UniProtKB-UniRule"/>
</dbReference>
<dbReference type="GO" id="GO:0006396">
    <property type="term" value="P:RNA processing"/>
    <property type="evidence" value="ECO:0007669"/>
    <property type="project" value="InterPro"/>
</dbReference>
<dbReference type="CDD" id="cd02393">
    <property type="entry name" value="KH-I_PNPase"/>
    <property type="match status" value="1"/>
</dbReference>
<dbReference type="CDD" id="cd11364">
    <property type="entry name" value="RNase_PH_PNPase_2"/>
    <property type="match status" value="1"/>
</dbReference>
<dbReference type="FunFam" id="3.30.1370.10:FF:000001">
    <property type="entry name" value="Polyribonucleotide nucleotidyltransferase"/>
    <property type="match status" value="1"/>
</dbReference>
<dbReference type="FunFam" id="3.30.230.70:FF:000001">
    <property type="entry name" value="Polyribonucleotide nucleotidyltransferase"/>
    <property type="match status" value="1"/>
</dbReference>
<dbReference type="FunFam" id="3.30.230.70:FF:000002">
    <property type="entry name" value="Polyribonucleotide nucleotidyltransferase"/>
    <property type="match status" value="1"/>
</dbReference>
<dbReference type="Gene3D" id="3.30.230.70">
    <property type="entry name" value="GHMP Kinase, N-terminal domain"/>
    <property type="match status" value="2"/>
</dbReference>
<dbReference type="Gene3D" id="3.30.1370.10">
    <property type="entry name" value="K Homology domain, type 1"/>
    <property type="match status" value="1"/>
</dbReference>
<dbReference type="Gene3D" id="2.40.50.140">
    <property type="entry name" value="Nucleic acid-binding proteins"/>
    <property type="match status" value="1"/>
</dbReference>
<dbReference type="HAMAP" id="MF_01595">
    <property type="entry name" value="PNPase"/>
    <property type="match status" value="1"/>
</dbReference>
<dbReference type="InterPro" id="IPR001247">
    <property type="entry name" value="ExoRNase_PH_dom1"/>
</dbReference>
<dbReference type="InterPro" id="IPR015847">
    <property type="entry name" value="ExoRNase_PH_dom2"/>
</dbReference>
<dbReference type="InterPro" id="IPR036345">
    <property type="entry name" value="ExoRNase_PH_dom2_sf"/>
</dbReference>
<dbReference type="InterPro" id="IPR004087">
    <property type="entry name" value="KH_dom"/>
</dbReference>
<dbReference type="InterPro" id="IPR004088">
    <property type="entry name" value="KH_dom_type_1"/>
</dbReference>
<dbReference type="InterPro" id="IPR036612">
    <property type="entry name" value="KH_dom_type_1_sf"/>
</dbReference>
<dbReference type="InterPro" id="IPR012340">
    <property type="entry name" value="NA-bd_OB-fold"/>
</dbReference>
<dbReference type="InterPro" id="IPR012162">
    <property type="entry name" value="PNPase"/>
</dbReference>
<dbReference type="InterPro" id="IPR027408">
    <property type="entry name" value="PNPase/RNase_PH_dom_sf"/>
</dbReference>
<dbReference type="InterPro" id="IPR015848">
    <property type="entry name" value="PNPase_PH_RNA-bd_bac/org-type"/>
</dbReference>
<dbReference type="InterPro" id="IPR036456">
    <property type="entry name" value="PNPase_PH_RNA-bd_sf"/>
</dbReference>
<dbReference type="InterPro" id="IPR020568">
    <property type="entry name" value="Ribosomal_Su5_D2-typ_SF"/>
</dbReference>
<dbReference type="InterPro" id="IPR003029">
    <property type="entry name" value="S1_domain"/>
</dbReference>
<dbReference type="NCBIfam" id="TIGR03591">
    <property type="entry name" value="polynuc_phos"/>
    <property type="match status" value="1"/>
</dbReference>
<dbReference type="NCBIfam" id="NF008805">
    <property type="entry name" value="PRK11824.1"/>
    <property type="match status" value="1"/>
</dbReference>
<dbReference type="PANTHER" id="PTHR11252">
    <property type="entry name" value="POLYRIBONUCLEOTIDE NUCLEOTIDYLTRANSFERASE"/>
    <property type="match status" value="1"/>
</dbReference>
<dbReference type="PANTHER" id="PTHR11252:SF0">
    <property type="entry name" value="POLYRIBONUCLEOTIDE NUCLEOTIDYLTRANSFERASE 1, MITOCHONDRIAL"/>
    <property type="match status" value="1"/>
</dbReference>
<dbReference type="Pfam" id="PF00013">
    <property type="entry name" value="KH_1"/>
    <property type="match status" value="1"/>
</dbReference>
<dbReference type="Pfam" id="PF03726">
    <property type="entry name" value="PNPase"/>
    <property type="match status" value="1"/>
</dbReference>
<dbReference type="Pfam" id="PF01138">
    <property type="entry name" value="RNase_PH"/>
    <property type="match status" value="2"/>
</dbReference>
<dbReference type="Pfam" id="PF03725">
    <property type="entry name" value="RNase_PH_C"/>
    <property type="match status" value="2"/>
</dbReference>
<dbReference type="Pfam" id="PF00575">
    <property type="entry name" value="S1"/>
    <property type="match status" value="1"/>
</dbReference>
<dbReference type="PIRSF" id="PIRSF005499">
    <property type="entry name" value="PNPase"/>
    <property type="match status" value="1"/>
</dbReference>
<dbReference type="SMART" id="SM00322">
    <property type="entry name" value="KH"/>
    <property type="match status" value="1"/>
</dbReference>
<dbReference type="SMART" id="SM00316">
    <property type="entry name" value="S1"/>
    <property type="match status" value="1"/>
</dbReference>
<dbReference type="SUPFAM" id="SSF54791">
    <property type="entry name" value="Eukaryotic type KH-domain (KH-domain type I)"/>
    <property type="match status" value="1"/>
</dbReference>
<dbReference type="SUPFAM" id="SSF50249">
    <property type="entry name" value="Nucleic acid-binding proteins"/>
    <property type="match status" value="1"/>
</dbReference>
<dbReference type="SUPFAM" id="SSF46915">
    <property type="entry name" value="Polynucleotide phosphorylase/guanosine pentaphosphate synthase (PNPase/GPSI), domain 3"/>
    <property type="match status" value="1"/>
</dbReference>
<dbReference type="SUPFAM" id="SSF55666">
    <property type="entry name" value="Ribonuclease PH domain 2-like"/>
    <property type="match status" value="2"/>
</dbReference>
<dbReference type="SUPFAM" id="SSF54211">
    <property type="entry name" value="Ribosomal protein S5 domain 2-like"/>
    <property type="match status" value="2"/>
</dbReference>
<dbReference type="PROSITE" id="PS50084">
    <property type="entry name" value="KH_TYPE_1"/>
    <property type="match status" value="1"/>
</dbReference>
<dbReference type="PROSITE" id="PS50126">
    <property type="entry name" value="S1"/>
    <property type="match status" value="1"/>
</dbReference>
<accession>Q3YSC4</accession>
<comment type="function">
    <text evidence="1">Involved in mRNA degradation. Catalyzes the phosphorolysis of single-stranded polyribonucleotides processively in the 3'- to 5'-direction.</text>
</comment>
<comment type="catalytic activity">
    <reaction evidence="1">
        <text>RNA(n+1) + phosphate = RNA(n) + a ribonucleoside 5'-diphosphate</text>
        <dbReference type="Rhea" id="RHEA:22096"/>
        <dbReference type="Rhea" id="RHEA-COMP:14527"/>
        <dbReference type="Rhea" id="RHEA-COMP:17342"/>
        <dbReference type="ChEBI" id="CHEBI:43474"/>
        <dbReference type="ChEBI" id="CHEBI:57930"/>
        <dbReference type="ChEBI" id="CHEBI:140395"/>
        <dbReference type="EC" id="2.7.7.8"/>
    </reaction>
</comment>
<comment type="cofactor">
    <cofactor evidence="1">
        <name>Mg(2+)</name>
        <dbReference type="ChEBI" id="CHEBI:18420"/>
    </cofactor>
</comment>
<comment type="subcellular location">
    <subcellularLocation>
        <location evidence="1">Cytoplasm</location>
    </subcellularLocation>
</comment>
<comment type="similarity">
    <text evidence="1">Belongs to the polyribonucleotide nucleotidyltransferase family.</text>
</comment>
<proteinExistence type="inferred from homology"/>
<keyword id="KW-0963">Cytoplasm</keyword>
<keyword id="KW-0460">Magnesium</keyword>
<keyword id="KW-0479">Metal-binding</keyword>
<keyword id="KW-0548">Nucleotidyltransferase</keyword>
<keyword id="KW-0694">RNA-binding</keyword>
<keyword id="KW-0808">Transferase</keyword>
<organism>
    <name type="scientific">Ehrlichia canis (strain Jake)</name>
    <dbReference type="NCBI Taxonomy" id="269484"/>
    <lineage>
        <taxon>Bacteria</taxon>
        <taxon>Pseudomonadati</taxon>
        <taxon>Pseudomonadota</taxon>
        <taxon>Alphaproteobacteria</taxon>
        <taxon>Rickettsiales</taxon>
        <taxon>Anaplasmataceae</taxon>
        <taxon>Ehrlichia</taxon>
    </lineage>
</organism>
<evidence type="ECO:0000255" key="1">
    <source>
        <dbReference type="HAMAP-Rule" id="MF_01595"/>
    </source>
</evidence>
<evidence type="ECO:0000256" key="2">
    <source>
        <dbReference type="SAM" id="MobiDB-lite"/>
    </source>
</evidence>
<feature type="chain" id="PRO_0000329630" description="Polyribonucleotide nucleotidyltransferase">
    <location>
        <begin position="1"/>
        <end position="796"/>
    </location>
</feature>
<feature type="domain" description="KH" evidence="1">
    <location>
        <begin position="557"/>
        <end position="616"/>
    </location>
</feature>
<feature type="domain" description="S1 motif" evidence="1">
    <location>
        <begin position="626"/>
        <end position="693"/>
    </location>
</feature>
<feature type="region of interest" description="Disordered" evidence="2">
    <location>
        <begin position="714"/>
        <end position="796"/>
    </location>
</feature>
<feature type="compositionally biased region" description="Low complexity" evidence="2">
    <location>
        <begin position="714"/>
        <end position="736"/>
    </location>
</feature>
<feature type="compositionally biased region" description="Basic residues" evidence="2">
    <location>
        <begin position="740"/>
        <end position="755"/>
    </location>
</feature>
<feature type="compositionally biased region" description="Low complexity" evidence="2">
    <location>
        <begin position="771"/>
        <end position="784"/>
    </location>
</feature>
<feature type="compositionally biased region" description="Basic and acidic residues" evidence="2">
    <location>
        <begin position="785"/>
        <end position="796"/>
    </location>
</feature>
<feature type="binding site" evidence="1">
    <location>
        <position position="490"/>
    </location>
    <ligand>
        <name>Mg(2+)</name>
        <dbReference type="ChEBI" id="CHEBI:18420"/>
    </ligand>
</feature>
<feature type="binding site" evidence="1">
    <location>
        <position position="496"/>
    </location>
    <ligand>
        <name>Mg(2+)</name>
        <dbReference type="ChEBI" id="CHEBI:18420"/>
    </ligand>
</feature>